<evidence type="ECO:0000250" key="1">
    <source>
        <dbReference type="UniProtKB" id="P23301"/>
    </source>
</evidence>
<evidence type="ECO:0000250" key="2">
    <source>
        <dbReference type="UniProtKB" id="P63241"/>
    </source>
</evidence>
<evidence type="ECO:0000255" key="3">
    <source>
        <dbReference type="RuleBase" id="RU362005"/>
    </source>
</evidence>
<evidence type="ECO:0000256" key="4">
    <source>
        <dbReference type="SAM" id="MobiDB-lite"/>
    </source>
</evidence>
<evidence type="ECO:0000269" key="5">
    <source>
    </source>
</evidence>
<evidence type="ECO:0000303" key="6">
    <source>
    </source>
</evidence>
<evidence type="ECO:0000305" key="7"/>
<evidence type="ECO:0000312" key="8">
    <source>
        <dbReference type="EMBL" id="EAN79055.1"/>
    </source>
</evidence>
<evidence type="ECO:0000312" key="9">
    <source>
        <dbReference type="Proteomes" id="UP000008524"/>
    </source>
</evidence>
<comment type="function">
    <text evidence="1 5">Translation factor that promotes translation elongation and termination, particularly upon ribosome stalling at specific amino acid sequence contexts (PubMed:26082486). Binds between the exit (E) and peptidyl (P) site of the ribosome and promotes rescue of stalled ribosome: specifically required for efficient translation of polyproline-containing peptides as well as other motifs that stall the ribosome (PubMed:26082486). Acts as a ribosome quality control (RQC) cofactor by joining the RQC complex to facilitate peptidyl transfer during CAT tailing step (By similarity). Required for cell growth during both bloodstream (BF) and insect procyclic (PF) life cycle stages and for survival of the bloodstream form (PubMed:26082486).</text>
</comment>
<comment type="subcellular location">
    <subcellularLocation>
        <location evidence="5">Cytoplasm</location>
    </subcellularLocation>
    <text evidence="5">Localizes to the cytoplasm in the procyclic insect (PF) life cycle stage.</text>
</comment>
<comment type="developmental stage">
    <text evidence="5">Expressed during both bloodstream (BF) and procyclic insect (PF) life cycle stages.</text>
</comment>
<comment type="PTM">
    <text evidence="3 5">Lys-52 undergoes hypusination, a unique post-translational modification that consists in the addition of a butylamino group from spermidine to lysine side chain, leading to the formation of the unusual amino acid hypusine. eIF-5As are the only known proteins to undergo this modification, which is essential for their function. Hypusination is mediated by the consecutive action of deoxyhypusine synthase DHSc and deoxyhypusine hydroxylase DOHH (PubMed:26082486).</text>
</comment>
<comment type="disruption phenotype">
    <text evidence="5">RNAi-mediated knockdown at the bloodstream life cycle stage causes a growth arrest followed by death. Cells become abnormally round, the number of cells with 1N1K and 2N2K genetic content is decreased whereas the number of cells with more than 2N2K genetic content is increased. RNAi-mediated knockdown at the insect procyclic life cycle stage causes a growth arrest without cell death. Cells become abnormally round and about 40 percent have lost their flagella. The number of cells with 2N1K and 2N2K genetic content is increased whereas the number of cells with 1N1K and 1N2K genetic content is reduced. The number of cells without nuclear DNA (0N1K), known as zoids, is increased. In addition, protein expression levels of formin (Tb927.5.2300) and CAP/Srv2p (Tb10.6k15.1160) are severely reduced.</text>
</comment>
<comment type="similarity">
    <text evidence="3">Belongs to the eIF-5A family.</text>
</comment>
<sequence length="166" mass="17820">MSDDEGQFAEGGAQVGSLTYPMQAGALKKGGYICINGRPCKVIDLSVSKTGKHGHAKVSIVALDIFTGNKMEDQAPSTHNVEVPFVKTATYSVLDIQEDREDPSKPAHLSLMDDEGETRDNLDMPPNAELAGQIKEQFDAGKDVLVVVVSAMGIDQILSFKNAAER</sequence>
<feature type="chain" id="PRO_0000438860" description="Eukaryotic translation initiation factor 5A" evidence="7">
    <location>
        <begin position="1"/>
        <end position="166"/>
    </location>
</feature>
<feature type="region of interest" description="Disordered" evidence="4">
    <location>
        <begin position="99"/>
        <end position="125"/>
    </location>
</feature>
<feature type="modified residue" description="Hypusine" evidence="2">
    <location>
        <position position="52"/>
    </location>
</feature>
<name>IF5A_TRYB2</name>
<accession>Q387H6</accession>
<protein>
    <recommendedName>
        <fullName evidence="3">Eukaryotic translation initiation factor 5A</fullName>
        <shortName evidence="3">eIF-5A</shortName>
    </recommendedName>
</protein>
<proteinExistence type="evidence at transcript level"/>
<keyword id="KW-0963">Cytoplasm</keyword>
<keyword id="KW-0251">Elongation factor</keyword>
<keyword id="KW-0385">Hypusine</keyword>
<keyword id="KW-0648">Protein biosynthesis</keyword>
<keyword id="KW-1185">Reference proteome</keyword>
<keyword id="KW-0694">RNA-binding</keyword>
<dbReference type="EMBL" id="CH464491">
    <property type="protein sequence ID" value="EAN79055.1"/>
    <property type="molecule type" value="Genomic_DNA"/>
</dbReference>
<dbReference type="RefSeq" id="XP_828167.1">
    <property type="nucleotide sequence ID" value="XM_823074.1"/>
</dbReference>
<dbReference type="SMR" id="Q387H6"/>
<dbReference type="FunCoup" id="Q387H6">
    <property type="interactions" value="329"/>
</dbReference>
<dbReference type="STRING" id="185431.Q387H6"/>
<dbReference type="PaxDb" id="5691-EAN79055"/>
<dbReference type="GeneID" id="3665847"/>
<dbReference type="KEGG" id="tbr:Tb11.03.0410"/>
<dbReference type="VEuPathDB" id="TriTrypDB:Tb927.11.740"/>
<dbReference type="eggNOG" id="KOG3271">
    <property type="taxonomic scope" value="Eukaryota"/>
</dbReference>
<dbReference type="InParanoid" id="Q387H6"/>
<dbReference type="OrthoDB" id="239323at2759"/>
<dbReference type="Proteomes" id="UP000008524">
    <property type="component" value="Chromosome 11 Scaffold 1"/>
</dbReference>
<dbReference type="GO" id="GO:0005737">
    <property type="term" value="C:cytoplasm"/>
    <property type="evidence" value="ECO:0000314"/>
    <property type="project" value="UniProtKB"/>
</dbReference>
<dbReference type="GO" id="GO:0043022">
    <property type="term" value="F:ribosome binding"/>
    <property type="evidence" value="ECO:0007669"/>
    <property type="project" value="InterPro"/>
</dbReference>
<dbReference type="GO" id="GO:0003723">
    <property type="term" value="F:RNA binding"/>
    <property type="evidence" value="ECO:0007669"/>
    <property type="project" value="UniProtKB-KW"/>
</dbReference>
<dbReference type="GO" id="GO:0003746">
    <property type="term" value="F:translation elongation factor activity"/>
    <property type="evidence" value="ECO:0000318"/>
    <property type="project" value="GO_Central"/>
</dbReference>
<dbReference type="GO" id="GO:0097622">
    <property type="term" value="P:cytoplasmic translational elongation through polyproline stretches"/>
    <property type="evidence" value="ECO:0000315"/>
    <property type="project" value="UniProtKB"/>
</dbReference>
<dbReference type="GO" id="GO:0032467">
    <property type="term" value="P:positive regulation of cytokinesis"/>
    <property type="evidence" value="ECO:0000315"/>
    <property type="project" value="UniProtKB"/>
</dbReference>
<dbReference type="GO" id="GO:0010628">
    <property type="term" value="P:positive regulation of gene expression"/>
    <property type="evidence" value="ECO:0000315"/>
    <property type="project" value="UniProtKB"/>
</dbReference>
<dbReference type="GO" id="GO:0045901">
    <property type="term" value="P:positive regulation of translational elongation"/>
    <property type="evidence" value="ECO:0007669"/>
    <property type="project" value="InterPro"/>
</dbReference>
<dbReference type="GO" id="GO:0045905">
    <property type="term" value="P:positive regulation of translational termination"/>
    <property type="evidence" value="ECO:0007669"/>
    <property type="project" value="InterPro"/>
</dbReference>
<dbReference type="GO" id="GO:0060491">
    <property type="term" value="P:regulation of cell projection assembly"/>
    <property type="evidence" value="ECO:0000315"/>
    <property type="project" value="UniProtKB"/>
</dbReference>
<dbReference type="GO" id="GO:0008360">
    <property type="term" value="P:regulation of cell shape"/>
    <property type="evidence" value="ECO:0000315"/>
    <property type="project" value="UniProtKB"/>
</dbReference>
<dbReference type="GO" id="GO:0006414">
    <property type="term" value="P:translational elongation"/>
    <property type="evidence" value="ECO:0000318"/>
    <property type="project" value="GO_Central"/>
</dbReference>
<dbReference type="CDD" id="cd04468">
    <property type="entry name" value="S1_eIF5A"/>
    <property type="match status" value="1"/>
</dbReference>
<dbReference type="FunFam" id="2.30.30.30:FF:000007">
    <property type="entry name" value="Eukaryotic translation initiation factor 5A"/>
    <property type="match status" value="1"/>
</dbReference>
<dbReference type="FunFam" id="2.40.50.140:FF:000307">
    <property type="entry name" value="Eukaryotic translation initiation factor 5A"/>
    <property type="match status" value="1"/>
</dbReference>
<dbReference type="Gene3D" id="2.30.30.30">
    <property type="match status" value="1"/>
</dbReference>
<dbReference type="Gene3D" id="2.40.50.140">
    <property type="entry name" value="Nucleic acid-binding proteins"/>
    <property type="match status" value="1"/>
</dbReference>
<dbReference type="InterPro" id="IPR001884">
    <property type="entry name" value="IF5A-like"/>
</dbReference>
<dbReference type="InterPro" id="IPR048670">
    <property type="entry name" value="IF5A-like_N"/>
</dbReference>
<dbReference type="InterPro" id="IPR012340">
    <property type="entry name" value="NA-bd_OB-fold"/>
</dbReference>
<dbReference type="InterPro" id="IPR014722">
    <property type="entry name" value="Rib_uL2_dom2"/>
</dbReference>
<dbReference type="InterPro" id="IPR019769">
    <property type="entry name" value="Trans_elong_IF5A_hypusine_site"/>
</dbReference>
<dbReference type="InterPro" id="IPR020189">
    <property type="entry name" value="Transl_elong_IF5A_C"/>
</dbReference>
<dbReference type="InterPro" id="IPR008991">
    <property type="entry name" value="Translation_prot_SH3-like_sf"/>
</dbReference>
<dbReference type="NCBIfam" id="TIGR00037">
    <property type="entry name" value="eIF_5A"/>
    <property type="match status" value="1"/>
</dbReference>
<dbReference type="PANTHER" id="PTHR11673">
    <property type="entry name" value="TRANSLATION INITIATION FACTOR 5A FAMILY MEMBER"/>
    <property type="match status" value="1"/>
</dbReference>
<dbReference type="Pfam" id="PF01287">
    <property type="entry name" value="eIF-5a"/>
    <property type="match status" value="1"/>
</dbReference>
<dbReference type="Pfam" id="PF21485">
    <property type="entry name" value="IF5A-like_N"/>
    <property type="match status" value="1"/>
</dbReference>
<dbReference type="PIRSF" id="PIRSF003025">
    <property type="entry name" value="eIF5A"/>
    <property type="match status" value="1"/>
</dbReference>
<dbReference type="SMART" id="SM01376">
    <property type="entry name" value="eIF-5a"/>
    <property type="match status" value="1"/>
</dbReference>
<dbReference type="SUPFAM" id="SSF50249">
    <property type="entry name" value="Nucleic acid-binding proteins"/>
    <property type="match status" value="1"/>
</dbReference>
<dbReference type="SUPFAM" id="SSF50104">
    <property type="entry name" value="Translation proteins SH3-like domain"/>
    <property type="match status" value="1"/>
</dbReference>
<dbReference type="PROSITE" id="PS00302">
    <property type="entry name" value="IF5A_HYPUSINE"/>
    <property type="match status" value="1"/>
</dbReference>
<organism evidence="9">
    <name type="scientific">Trypanosoma brucei brucei (strain 927/4 GUTat10.1)</name>
    <dbReference type="NCBI Taxonomy" id="185431"/>
    <lineage>
        <taxon>Eukaryota</taxon>
        <taxon>Discoba</taxon>
        <taxon>Euglenozoa</taxon>
        <taxon>Kinetoplastea</taxon>
        <taxon>Metakinetoplastina</taxon>
        <taxon>Trypanosomatida</taxon>
        <taxon>Trypanosomatidae</taxon>
        <taxon>Trypanosoma</taxon>
    </lineage>
</organism>
<gene>
    <name evidence="6" type="primary">eIF5A</name>
    <name evidence="8" type="ORF">Tb11.03.0410</name>
</gene>
<reference evidence="9" key="1">
    <citation type="journal article" date="2005" name="Science">
        <title>The genome of the African trypanosome Trypanosoma brucei.</title>
        <authorList>
            <person name="Berriman M."/>
            <person name="Ghedin E."/>
            <person name="Hertz-Fowler C."/>
            <person name="Blandin G."/>
            <person name="Renauld H."/>
            <person name="Bartholomeu D.C."/>
            <person name="Lennard N.J."/>
            <person name="Caler E."/>
            <person name="Hamlin N.E."/>
            <person name="Haas B."/>
            <person name="Bohme U."/>
            <person name="Hannick L."/>
            <person name="Aslett M.A."/>
            <person name="Shallom J."/>
            <person name="Marcello L."/>
            <person name="Hou L."/>
            <person name="Wickstead B."/>
            <person name="Alsmark U.C.M."/>
            <person name="Arrowsmith C."/>
            <person name="Atkin R.J."/>
            <person name="Barron A.J."/>
            <person name="Bringaud F."/>
            <person name="Brooks K."/>
            <person name="Carrington M."/>
            <person name="Cherevach I."/>
            <person name="Chillingworth T.J."/>
            <person name="Churcher C."/>
            <person name="Clark L.N."/>
            <person name="Corton C.H."/>
            <person name="Cronin A."/>
            <person name="Davies R.M."/>
            <person name="Doggett J."/>
            <person name="Djikeng A."/>
            <person name="Feldblyum T."/>
            <person name="Field M.C."/>
            <person name="Fraser A."/>
            <person name="Goodhead I."/>
            <person name="Hance Z."/>
            <person name="Harper D."/>
            <person name="Harris B.R."/>
            <person name="Hauser H."/>
            <person name="Hostetler J."/>
            <person name="Ivens A."/>
            <person name="Jagels K."/>
            <person name="Johnson D."/>
            <person name="Johnson J."/>
            <person name="Jones K."/>
            <person name="Kerhornou A.X."/>
            <person name="Koo H."/>
            <person name="Larke N."/>
            <person name="Landfear S."/>
            <person name="Larkin C."/>
            <person name="Leech V."/>
            <person name="Line A."/>
            <person name="Lord A."/>
            <person name="Macleod A."/>
            <person name="Mooney P.J."/>
            <person name="Moule S."/>
            <person name="Martin D.M."/>
            <person name="Morgan G.W."/>
            <person name="Mungall K."/>
            <person name="Norbertczak H."/>
            <person name="Ormond D."/>
            <person name="Pai G."/>
            <person name="Peacock C.S."/>
            <person name="Peterson J."/>
            <person name="Quail M.A."/>
            <person name="Rabbinowitsch E."/>
            <person name="Rajandream M.A."/>
            <person name="Reitter C."/>
            <person name="Salzberg S.L."/>
            <person name="Sanders M."/>
            <person name="Schobel S."/>
            <person name="Sharp S."/>
            <person name="Simmonds M."/>
            <person name="Simpson A.J."/>
            <person name="Tallon L."/>
            <person name="Turner C.M."/>
            <person name="Tait A."/>
            <person name="Tivey A.R."/>
            <person name="Van Aken S."/>
            <person name="Walker D."/>
            <person name="Wanless D."/>
            <person name="Wang S."/>
            <person name="White B."/>
            <person name="White O."/>
            <person name="Whitehead S."/>
            <person name="Woodward J."/>
            <person name="Wortman J."/>
            <person name="Adams M.D."/>
            <person name="Embley T.M."/>
            <person name="Gull K."/>
            <person name="Ullu E."/>
            <person name="Barry J.D."/>
            <person name="Fairlamb A.H."/>
            <person name="Opperdoes F."/>
            <person name="Barrell B.G."/>
            <person name="Donelson J.E."/>
            <person name="Hall N."/>
            <person name="Fraser C.M."/>
            <person name="Melville S.E."/>
            <person name="El-Sayed N.M.A."/>
        </authorList>
    </citation>
    <scope>NUCLEOTIDE SEQUENCE [LARGE SCALE GENOMIC DNA]</scope>
    <source>
        <strain>927/4 GUTat10.1</strain>
    </source>
</reference>
<reference evidence="7" key="2">
    <citation type="journal article" date="2015" name="J. Biol. Chem.">
        <title>Deoxyhypusine modification of eukaryotic translation initiation factor 5A (eIF5A) is essential for Trypanosoma brucei growth and for expression of polyprolyl-containing proteins.</title>
        <authorList>
            <person name="Nguyen S."/>
            <person name="Leija C."/>
            <person name="Kinch L."/>
            <person name="Regmi S."/>
            <person name="Li Q."/>
            <person name="Grishin N.V."/>
            <person name="Phillips M.A."/>
        </authorList>
    </citation>
    <scope>FUNCTION</scope>
    <scope>SUBCELLULAR LOCATION</scope>
    <scope>DEVELOPMENTAL STAGE</scope>
    <scope>HYPUSINATION</scope>
    <scope>DISRUPTION PHENOTYPE</scope>
</reference>